<accession>Q9C1I4</accession>
<keyword id="KW-0325">Glycoprotein</keyword>
<keyword id="KW-0349">Heme</keyword>
<keyword id="KW-0408">Iron</keyword>
<keyword id="KW-0479">Metal-binding</keyword>
<keyword id="KW-0503">Monooxygenase</keyword>
<keyword id="KW-0560">Oxidoreductase</keyword>
<keyword id="KW-0732">Signal</keyword>
<organism>
    <name type="scientific">Fusarium sporotrichioides</name>
    <dbReference type="NCBI Taxonomy" id="5514"/>
    <lineage>
        <taxon>Eukaryota</taxon>
        <taxon>Fungi</taxon>
        <taxon>Dikarya</taxon>
        <taxon>Ascomycota</taxon>
        <taxon>Pezizomycotina</taxon>
        <taxon>Sordariomycetes</taxon>
        <taxon>Hypocreomycetidae</taxon>
        <taxon>Hypocreales</taxon>
        <taxon>Nectriaceae</taxon>
        <taxon>Fusarium</taxon>
    </lineage>
</organism>
<sequence length="589" mass="66071">MFLSLCLMVLALYLLYKWALPKPISSIPYNPPALQSLFGDIPAMIQGTKANNQTHMDWIIQQMKNHESPIIQLFLSPLQRPTVILADFRETQDIMLRRKDFDRSTNIRGLLEDVIPDHHIYEQTNSVFRTHRKLVQDVMLPSFIQKVAGPAFHSNIMRLVRVWDLKAQIADGSPFLATQDIQGAVLDAVYSFAFGSYYKSSTTLPKIEKLEKWNGNAENSSRNAPQSDKPFDFPDVAFDDLINATIDLAKAPQGLQGSPIAKLQAKVTMNMPHFRRVRKIRDDFLRGSLKSAVSKLPSEGGKSDSQAVTSAVEQMVLRETALAQTENRSPNYFSTMMQGELFGLILGGFDTTSTTTLWGLKFLTDNASVQKRLRQALQSSFTKAKAENRSPTFQELAVARIPYLEAVIEEILRCAGATPALQRLAKVDTQILGYHIPKGTDVLFLTHGPSVWTPGFEIDESRRSQTCQAAGEKKDQCWESHDISKFKPERWLGQKLPSNNREKDTDATETAEEFDGLAGPTLAFGLGTRGCFGRRLGYQQLKTSITILIWNFELLPCPQELSSYRTIEGLTSMPEHSYISLAKVDLTTT</sequence>
<dbReference type="EC" id="1.-.-.-" evidence="9"/>
<dbReference type="EMBL" id="AF330109">
    <property type="protein sequence ID" value="AAK15528.2"/>
    <property type="molecule type" value="Genomic_DNA"/>
</dbReference>
<dbReference type="EMBL" id="AF359360">
    <property type="protein sequence ID" value="AAN40834.1"/>
    <property type="molecule type" value="Genomic_DNA"/>
</dbReference>
<dbReference type="SMR" id="Q9C1I4"/>
<dbReference type="GlyCosmos" id="Q9C1I4">
    <property type="glycosylation" value="4 sites, No reported glycans"/>
</dbReference>
<dbReference type="BioCyc" id="MetaCyc:MONOMER-19566"/>
<dbReference type="UniPathway" id="UPA00267"/>
<dbReference type="GO" id="GO:0020037">
    <property type="term" value="F:heme binding"/>
    <property type="evidence" value="ECO:0007669"/>
    <property type="project" value="InterPro"/>
</dbReference>
<dbReference type="GO" id="GO:0005506">
    <property type="term" value="F:iron ion binding"/>
    <property type="evidence" value="ECO:0007669"/>
    <property type="project" value="InterPro"/>
</dbReference>
<dbReference type="GO" id="GO:0004497">
    <property type="term" value="F:monooxygenase activity"/>
    <property type="evidence" value="ECO:0007669"/>
    <property type="project" value="UniProtKB-KW"/>
</dbReference>
<dbReference type="GO" id="GO:0016705">
    <property type="term" value="F:oxidoreductase activity, acting on paired donors, with incorporation or reduction of molecular oxygen"/>
    <property type="evidence" value="ECO:0007669"/>
    <property type="project" value="InterPro"/>
</dbReference>
<dbReference type="CDD" id="cd20622">
    <property type="entry name" value="CYP_TRI13-like"/>
    <property type="match status" value="1"/>
</dbReference>
<dbReference type="Gene3D" id="1.10.630.10">
    <property type="entry name" value="Cytochrome P450"/>
    <property type="match status" value="1"/>
</dbReference>
<dbReference type="InterPro" id="IPR001128">
    <property type="entry name" value="Cyt_P450"/>
</dbReference>
<dbReference type="InterPro" id="IPR017972">
    <property type="entry name" value="Cyt_P450_CS"/>
</dbReference>
<dbReference type="InterPro" id="IPR002403">
    <property type="entry name" value="Cyt_P450_E_grp-IV"/>
</dbReference>
<dbReference type="InterPro" id="IPR036396">
    <property type="entry name" value="Cyt_P450_sf"/>
</dbReference>
<dbReference type="InterPro" id="IPR050121">
    <property type="entry name" value="Cytochrome_P450_monoxygenase"/>
</dbReference>
<dbReference type="PANTHER" id="PTHR24305">
    <property type="entry name" value="CYTOCHROME P450"/>
    <property type="match status" value="1"/>
</dbReference>
<dbReference type="PANTHER" id="PTHR24305:SF232">
    <property type="entry name" value="P450, PUTATIVE (EUROFUNG)-RELATED"/>
    <property type="match status" value="1"/>
</dbReference>
<dbReference type="Pfam" id="PF00067">
    <property type="entry name" value="p450"/>
    <property type="match status" value="2"/>
</dbReference>
<dbReference type="PRINTS" id="PR00465">
    <property type="entry name" value="EP450IV"/>
</dbReference>
<dbReference type="PRINTS" id="PR00385">
    <property type="entry name" value="P450"/>
</dbReference>
<dbReference type="SUPFAM" id="SSF48264">
    <property type="entry name" value="Cytochrome P450"/>
    <property type="match status" value="1"/>
</dbReference>
<dbReference type="PROSITE" id="PS00086">
    <property type="entry name" value="CYTOCHROME_P450"/>
    <property type="match status" value="1"/>
</dbReference>
<feature type="signal peptide" evidence="2">
    <location>
        <begin position="1"/>
        <end position="21"/>
    </location>
</feature>
<feature type="chain" id="PRO_5007716314" description="Cytochrome P450 monooxygenase TRI13" evidence="2">
    <location>
        <begin position="22"/>
        <end position="589"/>
    </location>
</feature>
<feature type="binding site" description="axial binding residue" evidence="1">
    <location>
        <position position="531"/>
    </location>
    <ligand>
        <name>heme</name>
        <dbReference type="ChEBI" id="CHEBI:30413"/>
    </ligand>
    <ligandPart>
        <name>Fe</name>
        <dbReference type="ChEBI" id="CHEBI:18248"/>
    </ligandPart>
</feature>
<feature type="glycosylation site" description="N-linked (GlcNAc...) asparagine" evidence="3">
    <location>
        <position position="52"/>
    </location>
</feature>
<feature type="glycosylation site" description="N-linked (GlcNAc...) asparagine" evidence="3">
    <location>
        <position position="219"/>
    </location>
</feature>
<feature type="glycosylation site" description="N-linked (GlcNAc...) asparagine" evidence="3">
    <location>
        <position position="243"/>
    </location>
</feature>
<feature type="glycosylation site" description="N-linked (GlcNAc...) asparagine" evidence="3">
    <location>
        <position position="366"/>
    </location>
</feature>
<reference key="1">
    <citation type="journal article" date="2001" name="Fungal Genet. Biol.">
        <title>A genetic and biochemical approach to study trichothecene diversity in Fusarium sporotrichioides and Fusarium graminearum.</title>
        <authorList>
            <person name="Brown D.W."/>
            <person name="McCormick S.P."/>
            <person name="Alexander N.J."/>
            <person name="Proctor R.H."/>
            <person name="Desjardins A.E."/>
        </authorList>
    </citation>
    <scope>NUCLEOTIDE SEQUENCE [GENOMIC DNA]</scope>
    <scope>FUNCTION</scope>
    <source>
        <strain>ATCC 24631 / NRRL 3299</strain>
    </source>
</reference>
<reference key="2">
    <citation type="journal article" date="2002" name="Fungal Genet. Biol.">
        <title>Inactivation of a cytochrome P-450 is a determinant of trichothecene diversity in Fusarium species.</title>
        <authorList>
            <person name="Brown D.W."/>
            <person name="McCormick S.P."/>
            <person name="Alexander N.J."/>
            <person name="Proctor R.H."/>
            <person name="Desjardins A.E."/>
        </authorList>
    </citation>
    <scope>NUCLEOTIDE SEQUENCE [GENOMIC DNA]</scope>
    <scope>IDENTIFICATION</scope>
    <scope>FUNCTION</scope>
    <scope>DISRUPTION PHENOTYPE</scope>
    <scope>PATHWAY</scope>
</reference>
<reference key="3">
    <citation type="journal article" date="2003" name="Appl. Environ. Microbiol.">
        <title>Identification of new genes positively regulated by Tri10 and a regulatory network for trichothecene mycotoxin production.</title>
        <authorList>
            <person name="Peplow A.W."/>
            <person name="Tag A.G."/>
            <person name="Garifullina G.F."/>
            <person name="Beremand M.N."/>
        </authorList>
    </citation>
    <scope>NUCLEOTIDE SEQUENCE [GENOMIC DNA]</scope>
    <scope>IDENTIFICATION</scope>
    <scope>INDUCTION</scope>
    <source>
        <strain>ATCC 24631 / NRRL 3299</strain>
    </source>
</reference>
<reference key="4">
    <citation type="journal article" date="1986" name="Arch. Biochem. Biophys.">
        <title>Purification and characterization of the sesquiterpene cyclase trichodiene synthetase from Fusarium sporotrichioides.</title>
        <authorList>
            <person name="Hohn T.M."/>
            <person name="Vanmiddlesworth F."/>
        </authorList>
    </citation>
    <scope>FUNCTION</scope>
</reference>
<reference key="5">
    <citation type="journal article" date="1990" name="Appl. Environ. Microbiol.">
        <title>Bioconversion of possible T-2 toxin precursors by a mutant strain of Fusarium sporotrichioides NRRL 3299.</title>
        <authorList>
            <person name="McCormick S.P."/>
            <person name="Taylor S.L."/>
            <person name="Plattner R.D."/>
            <person name="Beremand M.N."/>
        </authorList>
    </citation>
    <scope>FUNCTION</scope>
</reference>
<reference key="6">
    <citation type="journal article" date="1995" name="Mol. Gen. Genet.">
        <title>The Tri4 gene of Fusarium sporotrichioides encodes a cytochrome P450 monooxygenase involved in trichothecene biosynthesis.</title>
        <authorList>
            <person name="Hohn T.M."/>
            <person name="Desjardins A.E."/>
            <person name="McCormick S.P."/>
        </authorList>
    </citation>
    <scope>FUNCTION</scope>
</reference>
<reference key="7">
    <citation type="journal article" date="1996" name="Appl. Environ. Microbiol.">
        <title>Isolation and characterization of Tri3, a gene encoding 15-O-acetyltransferase from Fusarium sporotrichioides.</title>
        <authorList>
            <person name="McCormick S.P."/>
            <person name="Hohn T.M."/>
            <person name="Desjardins A.E."/>
        </authorList>
    </citation>
    <scope>FUNCTION</scope>
</reference>
<reference key="8">
    <citation type="journal article" date="1998" name="Appl. Environ. Microbiol.">
        <title>The TRI11 gene of Fusarium sporotrichioides encodes a cytochrome P-450 monooxygenase required for C-15 hydroxylation in trichothecene biosynthesis.</title>
        <authorList>
            <person name="Alexander N.J."/>
            <person name="Hohn T.M."/>
            <person name="McCormick S.P."/>
        </authorList>
    </citation>
    <scope>FUNCTION</scope>
</reference>
<reference key="9">
    <citation type="journal article" date="1999" name="Appl. Environ. Microbiol.">
        <title>Disruption of TRI101, the gene encoding trichothecene 3-O-acetyltransferase, from Fusarium sporotrichioides.</title>
        <authorList>
            <person name="McCormick S.P."/>
            <person name="Alexander N.J."/>
            <person name="Trapp S.E."/>
            <person name="Hohn T.M."/>
        </authorList>
    </citation>
    <scope>FUNCTION</scope>
</reference>
<reference key="10">
    <citation type="journal article" date="2002" name="Appl. Environ. Microbiol.">
        <title>Fusarium Tri8 encodes a trichothecene C-3 esterase.</title>
        <authorList>
            <person name="McCormick S.P."/>
            <person name="Alexander N.J."/>
        </authorList>
    </citation>
    <scope>FUNCTION</scope>
</reference>
<reference key="11">
    <citation type="journal article" date="2003" name="Appl. Environ. Microbiol.">
        <title>Tri1 encodes the cytochrome P450 monooxygenase for C-8 hydroxylation during trichothecene biosynthesis in Fusarium sporotrichioides and resides upstream of another new Tri gene.</title>
        <authorList>
            <person name="Meek I.B."/>
            <person name="Peplow A.W."/>
            <person name="Ake C. Jr."/>
            <person name="Phillips T.D."/>
            <person name="Beremand M.N."/>
        </authorList>
    </citation>
    <scope>FUNCTION</scope>
</reference>
<reference key="12">
    <citation type="journal article" date="2003" name="Appl. Environ. Microbiol.">
        <title>Tri16 is required for esterification of position C-8 during trichothecene mycotoxin production by Fusarium sporotrichioides.</title>
        <authorList>
            <person name="Peplow A.W."/>
            <person name="Meek I.B."/>
            <person name="Wiles M.C."/>
            <person name="Phillips T.D."/>
            <person name="Beremand M.N."/>
        </authorList>
    </citation>
    <scope>FUNCTION</scope>
</reference>
<reference key="13">
    <citation type="journal article" date="2006" name="Can. J. Microbiol.">
        <title>Fusarium Tri4 encodes a multifunctional oxygenase required for trichothecene biosynthesis.</title>
        <authorList>
            <person name="McCormick S.P."/>
            <person name="Alexander N.J."/>
            <person name="Proctor R.H."/>
        </authorList>
    </citation>
    <scope>FUNCTION</scope>
</reference>
<comment type="function">
    <text evidence="4 5 6 7 8 10 11 12 13 14 15 16">Cytochrome P450 monooxygenase; part of the core gene cluster that mediates the biosynthesis of trichothecenes, a very large family of chemically related bicyclic sesquiterpene compounds acting as mycotoxins, including T2-toxin (PubMed:11352533, PubMed:12135578). The biosynthesis of trichothecenes begins with the cyclization of farnesyl diphosphate to trichodiene and is catalyzed by the trichodiene synthase TRI5 (PubMed:3800398). Trichodiene undergoes a series of oxygenations catalyzed by the cytochrome P450 monooxygenase TRI4 (PubMed:7651333). TRI4 controls the addition of four oxygens at C-2, C-3, C-11, and the C-12, C-13-epoxide to form the intermediate isotrichotriol (PubMed:16917519). Isotrichotriol then undergoes a non-enzymatic isomerization and cyclization to form isotrichodermol (PubMed:2317042). During this process, the oxygen at the C-2 position becomes the pyran ring oxygen and the hydroxyl group at C-11 is lost (PubMed:2317042). More complex type A trichothecenes are built by modifying isotrichodermol through a series of paired hydroxylation and acetylation or acylation steps (PubMed:11352533). Isotrichodermol is converted to isotrichodermin by the acetyltransferase TRI101 (PubMed:10583973). TRI101 encodes a C-3 transacetylase that acts as a self-protection or resistance factor during biosynthesis and that the presence of a free C-3 hydroxyl group is a key component of Fusarium trichothecene phytotoxicity (PubMed:10583973). A second hydroxyl group is added to C-15 by the trichothecene C-15 hydroxylase TRI11, producing 15-decalonectrin, which is then acetylated by TRI3, producing calonectrin (PubMed:8593041, PubMed:9435078). A third hydroxyl group is added at C-4 by the cytochrome P450 monooxygenase TRI13, converting calonectrin to 3,15-diacetoxyspirpenol, which is subsequently acetylated by the acetyltransferase TRI7 (PubMed:11352533, PubMed:12135578). A fourth hydroxyl group is added to C-8 by the cytochrome P450 monooxygenase TRI1, followed by the addition of an isovaleryl moiety by TRI16 (PubMed:12620849, PubMed:14532047). Finally, the acetyl group is removed from the C-3 position by the trichothecene C-3 esterase TRI8 to produce T-2 toxin (PubMed:12039755).</text>
</comment>
<comment type="cofactor">
    <cofactor evidence="1">
        <name>heme</name>
        <dbReference type="ChEBI" id="CHEBI:30413"/>
    </cofactor>
</comment>
<comment type="pathway">
    <text evidence="7">Sesquiterpene biosynthesis; trichothecene biosynthesis.</text>
</comment>
<comment type="induction">
    <text evidence="9">Expression is positively regulated by the trichothecene cluster-specific transcription activator TRI10 (PubMed:12732543).</text>
</comment>
<comment type="disruption phenotype">
    <text evidence="7">Impairs the production of T-2 toxin accumulates 2 new trichothecenes, 8-hydroxycalonectrin and 4-deoxy-T-2 toxin (PubMed:12135578).</text>
</comment>
<comment type="miscellaneous">
    <text evidence="18">Trichothecenes are sesquiterpenoid toxins that act by inhibiting protein biosynthesis.</text>
</comment>
<comment type="similarity">
    <text evidence="18">Belongs to the cytochrome P450 family.</text>
</comment>
<protein>
    <recommendedName>
        <fullName evidence="17">Cytochrome P450 monooxygenase TRI13</fullName>
        <ecNumber evidence="9">1.-.-.-</ecNumber>
    </recommendedName>
    <alternativeName>
        <fullName evidence="17">Core trichothecene cluster (CTC) protein 13</fullName>
    </alternativeName>
</protein>
<name>TRI13_FUSSP</name>
<gene>
    <name evidence="17" type="primary">TRI13</name>
</gene>
<proteinExistence type="evidence at transcript level"/>
<evidence type="ECO:0000250" key="1">
    <source>
        <dbReference type="UniProtKB" id="P04798"/>
    </source>
</evidence>
<evidence type="ECO:0000255" key="2"/>
<evidence type="ECO:0000255" key="3">
    <source>
        <dbReference type="PROSITE-ProRule" id="PRU00498"/>
    </source>
</evidence>
<evidence type="ECO:0000269" key="4">
    <source>
    </source>
</evidence>
<evidence type="ECO:0000269" key="5">
    <source>
    </source>
</evidence>
<evidence type="ECO:0000269" key="6">
    <source>
    </source>
</evidence>
<evidence type="ECO:0000269" key="7">
    <source>
    </source>
</evidence>
<evidence type="ECO:0000269" key="8">
    <source>
    </source>
</evidence>
<evidence type="ECO:0000269" key="9">
    <source>
    </source>
</evidence>
<evidence type="ECO:0000269" key="10">
    <source>
    </source>
</evidence>
<evidence type="ECO:0000269" key="11">
    <source>
    </source>
</evidence>
<evidence type="ECO:0000269" key="12">
    <source>
    </source>
</evidence>
<evidence type="ECO:0000269" key="13">
    <source>
    </source>
</evidence>
<evidence type="ECO:0000269" key="14">
    <source>
    </source>
</evidence>
<evidence type="ECO:0000269" key="15">
    <source>
    </source>
</evidence>
<evidence type="ECO:0000269" key="16">
    <source>
    </source>
</evidence>
<evidence type="ECO:0000303" key="17">
    <source>
    </source>
</evidence>
<evidence type="ECO:0000305" key="18"/>